<accession>C6E4P4</accession>
<organism>
    <name type="scientific">Geobacter sp. (strain M21)</name>
    <dbReference type="NCBI Taxonomy" id="443144"/>
    <lineage>
        <taxon>Bacteria</taxon>
        <taxon>Pseudomonadati</taxon>
        <taxon>Thermodesulfobacteriota</taxon>
        <taxon>Desulfuromonadia</taxon>
        <taxon>Geobacterales</taxon>
        <taxon>Geobacteraceae</taxon>
        <taxon>Geobacter</taxon>
    </lineage>
</organism>
<sequence length="61" mass="7162">MAKTSMIIKAQRGNKFKVRERNRCPLCGRPRAYYRKFDMCRICLRKLSNLGQVPGVIKSSW</sequence>
<gene>
    <name evidence="1" type="primary">rpsZ</name>
    <name evidence="1" type="synonym">rpsN</name>
    <name type="ordered locus">GM21_3315</name>
</gene>
<protein>
    <recommendedName>
        <fullName evidence="1">Small ribosomal subunit protein uS14</fullName>
    </recommendedName>
    <alternativeName>
        <fullName evidence="2">30S ribosomal protein S14 type Z</fullName>
    </alternativeName>
</protein>
<reference key="1">
    <citation type="submission" date="2009-07" db="EMBL/GenBank/DDBJ databases">
        <title>Complete sequence of Geobacter sp. M21.</title>
        <authorList>
            <consortium name="US DOE Joint Genome Institute"/>
            <person name="Lucas S."/>
            <person name="Copeland A."/>
            <person name="Lapidus A."/>
            <person name="Glavina del Rio T."/>
            <person name="Dalin E."/>
            <person name="Tice H."/>
            <person name="Bruce D."/>
            <person name="Goodwin L."/>
            <person name="Pitluck S."/>
            <person name="Saunders E."/>
            <person name="Brettin T."/>
            <person name="Detter J.C."/>
            <person name="Han C."/>
            <person name="Larimer F."/>
            <person name="Land M."/>
            <person name="Hauser L."/>
            <person name="Kyrpides N."/>
            <person name="Ovchinnikova G."/>
            <person name="Lovley D."/>
        </authorList>
    </citation>
    <scope>NUCLEOTIDE SEQUENCE [LARGE SCALE GENOMIC DNA]</scope>
    <source>
        <strain>M21</strain>
    </source>
</reference>
<comment type="function">
    <text evidence="1">Binds 16S rRNA, required for the assembly of 30S particles and may also be responsible for determining the conformation of the 16S rRNA at the A site.</text>
</comment>
<comment type="cofactor">
    <cofactor evidence="1">
        <name>Zn(2+)</name>
        <dbReference type="ChEBI" id="CHEBI:29105"/>
    </cofactor>
    <text evidence="1">Binds 1 zinc ion per subunit.</text>
</comment>
<comment type="subunit">
    <text evidence="1">Part of the 30S ribosomal subunit. Contacts proteins S3 and S10.</text>
</comment>
<comment type="similarity">
    <text evidence="1">Belongs to the universal ribosomal protein uS14 family. Zinc-binding uS14 subfamily.</text>
</comment>
<feature type="chain" id="PRO_1000214912" description="Small ribosomal subunit protein uS14">
    <location>
        <begin position="1"/>
        <end position="61"/>
    </location>
</feature>
<feature type="binding site" evidence="1">
    <location>
        <position position="24"/>
    </location>
    <ligand>
        <name>Zn(2+)</name>
        <dbReference type="ChEBI" id="CHEBI:29105"/>
    </ligand>
</feature>
<feature type="binding site" evidence="1">
    <location>
        <position position="27"/>
    </location>
    <ligand>
        <name>Zn(2+)</name>
        <dbReference type="ChEBI" id="CHEBI:29105"/>
    </ligand>
</feature>
<feature type="binding site" evidence="1">
    <location>
        <position position="40"/>
    </location>
    <ligand>
        <name>Zn(2+)</name>
        <dbReference type="ChEBI" id="CHEBI:29105"/>
    </ligand>
</feature>
<feature type="binding site" evidence="1">
    <location>
        <position position="43"/>
    </location>
    <ligand>
        <name>Zn(2+)</name>
        <dbReference type="ChEBI" id="CHEBI:29105"/>
    </ligand>
</feature>
<evidence type="ECO:0000255" key="1">
    <source>
        <dbReference type="HAMAP-Rule" id="MF_01364"/>
    </source>
</evidence>
<evidence type="ECO:0000305" key="2"/>
<proteinExistence type="inferred from homology"/>
<dbReference type="EMBL" id="CP001661">
    <property type="protein sequence ID" value="ACT19340.1"/>
    <property type="molecule type" value="Genomic_DNA"/>
</dbReference>
<dbReference type="SMR" id="C6E4P4"/>
<dbReference type="STRING" id="443144.GM21_3315"/>
<dbReference type="KEGG" id="gem:GM21_3315"/>
<dbReference type="eggNOG" id="COG0199">
    <property type="taxonomic scope" value="Bacteria"/>
</dbReference>
<dbReference type="HOGENOM" id="CLU_139869_3_0_7"/>
<dbReference type="OrthoDB" id="9810484at2"/>
<dbReference type="GO" id="GO:0005737">
    <property type="term" value="C:cytoplasm"/>
    <property type="evidence" value="ECO:0007669"/>
    <property type="project" value="UniProtKB-ARBA"/>
</dbReference>
<dbReference type="GO" id="GO:0015935">
    <property type="term" value="C:small ribosomal subunit"/>
    <property type="evidence" value="ECO:0007669"/>
    <property type="project" value="TreeGrafter"/>
</dbReference>
<dbReference type="GO" id="GO:0019843">
    <property type="term" value="F:rRNA binding"/>
    <property type="evidence" value="ECO:0007669"/>
    <property type="project" value="UniProtKB-UniRule"/>
</dbReference>
<dbReference type="GO" id="GO:0003735">
    <property type="term" value="F:structural constituent of ribosome"/>
    <property type="evidence" value="ECO:0007669"/>
    <property type="project" value="InterPro"/>
</dbReference>
<dbReference type="GO" id="GO:0008270">
    <property type="term" value="F:zinc ion binding"/>
    <property type="evidence" value="ECO:0007669"/>
    <property type="project" value="UniProtKB-UniRule"/>
</dbReference>
<dbReference type="GO" id="GO:0006412">
    <property type="term" value="P:translation"/>
    <property type="evidence" value="ECO:0007669"/>
    <property type="project" value="UniProtKB-UniRule"/>
</dbReference>
<dbReference type="FunFam" id="4.10.830.10:FF:000001">
    <property type="entry name" value="30S ribosomal protein S14 type Z"/>
    <property type="match status" value="1"/>
</dbReference>
<dbReference type="Gene3D" id="4.10.830.10">
    <property type="entry name" value="30s Ribosomal Protein S14, Chain N"/>
    <property type="match status" value="1"/>
</dbReference>
<dbReference type="HAMAP" id="MF_01364_B">
    <property type="entry name" value="Ribosomal_uS14_2_B"/>
    <property type="match status" value="1"/>
</dbReference>
<dbReference type="InterPro" id="IPR001209">
    <property type="entry name" value="Ribosomal_uS14"/>
</dbReference>
<dbReference type="InterPro" id="IPR023053">
    <property type="entry name" value="Ribosomal_uS14_bact"/>
</dbReference>
<dbReference type="InterPro" id="IPR018271">
    <property type="entry name" value="Ribosomal_uS14_CS"/>
</dbReference>
<dbReference type="InterPro" id="IPR043140">
    <property type="entry name" value="Ribosomal_uS14_sf"/>
</dbReference>
<dbReference type="NCBIfam" id="NF005974">
    <property type="entry name" value="PRK08061.1"/>
    <property type="match status" value="1"/>
</dbReference>
<dbReference type="PANTHER" id="PTHR19836">
    <property type="entry name" value="30S RIBOSOMAL PROTEIN S14"/>
    <property type="match status" value="1"/>
</dbReference>
<dbReference type="PANTHER" id="PTHR19836:SF19">
    <property type="entry name" value="SMALL RIBOSOMAL SUBUNIT PROTEIN US14M"/>
    <property type="match status" value="1"/>
</dbReference>
<dbReference type="Pfam" id="PF00253">
    <property type="entry name" value="Ribosomal_S14"/>
    <property type="match status" value="1"/>
</dbReference>
<dbReference type="SUPFAM" id="SSF57716">
    <property type="entry name" value="Glucocorticoid receptor-like (DNA-binding domain)"/>
    <property type="match status" value="1"/>
</dbReference>
<dbReference type="PROSITE" id="PS00527">
    <property type="entry name" value="RIBOSOMAL_S14"/>
    <property type="match status" value="1"/>
</dbReference>
<keyword id="KW-0479">Metal-binding</keyword>
<keyword id="KW-0687">Ribonucleoprotein</keyword>
<keyword id="KW-0689">Ribosomal protein</keyword>
<keyword id="KW-0694">RNA-binding</keyword>
<keyword id="KW-0699">rRNA-binding</keyword>
<keyword id="KW-0862">Zinc</keyword>
<name>RS14Z_GEOSM</name>